<gene>
    <name evidence="1" type="primary">gatB</name>
    <name type="ordered locus">cgR_1336</name>
</gene>
<organism>
    <name type="scientific">Corynebacterium glutamicum (strain R)</name>
    <dbReference type="NCBI Taxonomy" id="340322"/>
    <lineage>
        <taxon>Bacteria</taxon>
        <taxon>Bacillati</taxon>
        <taxon>Actinomycetota</taxon>
        <taxon>Actinomycetes</taxon>
        <taxon>Mycobacteriales</taxon>
        <taxon>Corynebacteriaceae</taxon>
        <taxon>Corynebacterium</taxon>
    </lineage>
</organism>
<name>GATB_CORGB</name>
<proteinExistence type="inferred from homology"/>
<keyword id="KW-0067">ATP-binding</keyword>
<keyword id="KW-0436">Ligase</keyword>
<keyword id="KW-0547">Nucleotide-binding</keyword>
<keyword id="KW-0648">Protein biosynthesis</keyword>
<sequence length="501" mass="54493">MTAAFYDLMDFDEVLEKYDPVMGLEVHVELGTETKMFSASSAHFGAEPNSNVDPVSLGLPGALPVVNAKGVEWAIKIGLALNCSIAESSRFARKNYFYPDQPKNYQISQYDEPIAYDGYLDVVLEDGTEWRVEIERAHMEEDTGKLTHLGGTSGRIHGATASLVDCNRAGIPLIEVVTKPIEGAGARAPEIAKAYVSALRDLVKALGVSDGRLDQGSMRVDANLSLRPIGQEEFGTRTETKNINSLKSVEQAITFEMQRQAQVLDDGGVIDQETRHYQEADGSTSKGRPKETAEDYRYFNDPDLPPVIAPREWVEEIRATLPELPWVRRARIQEEWKLSDAEMRDLINANALDLIIETVEAGTTPDEARAWWVSYISQKANESGVELDALGVAPAHVARVVALVSEGKLTNKLARQAIDGVIAGEGDVDAVVAARGLEVVRDDGAIEKAVDEALAANPDIVEKYRAGNTKVTGAIVGAVMKATRGKADPAQVNQLIAKKLA</sequence>
<accession>A4QDM0</accession>
<dbReference type="EC" id="6.3.5.-" evidence="1"/>
<dbReference type="EMBL" id="AP009044">
    <property type="protein sequence ID" value="BAF54317.1"/>
    <property type="molecule type" value="Genomic_DNA"/>
</dbReference>
<dbReference type="RefSeq" id="WP_011897116.1">
    <property type="nucleotide sequence ID" value="NC_009342.1"/>
</dbReference>
<dbReference type="SMR" id="A4QDM0"/>
<dbReference type="KEGG" id="cgt:cgR_1336"/>
<dbReference type="HOGENOM" id="CLU_019240_0_0_11"/>
<dbReference type="PhylomeDB" id="A4QDM0"/>
<dbReference type="Proteomes" id="UP000006698">
    <property type="component" value="Chromosome"/>
</dbReference>
<dbReference type="GO" id="GO:0050566">
    <property type="term" value="F:asparaginyl-tRNA synthase (glutamine-hydrolyzing) activity"/>
    <property type="evidence" value="ECO:0007669"/>
    <property type="project" value="RHEA"/>
</dbReference>
<dbReference type="GO" id="GO:0005524">
    <property type="term" value="F:ATP binding"/>
    <property type="evidence" value="ECO:0007669"/>
    <property type="project" value="UniProtKB-KW"/>
</dbReference>
<dbReference type="GO" id="GO:0050567">
    <property type="term" value="F:glutaminyl-tRNA synthase (glutamine-hydrolyzing) activity"/>
    <property type="evidence" value="ECO:0007669"/>
    <property type="project" value="UniProtKB-UniRule"/>
</dbReference>
<dbReference type="GO" id="GO:0070681">
    <property type="term" value="P:glutaminyl-tRNAGln biosynthesis via transamidation"/>
    <property type="evidence" value="ECO:0007669"/>
    <property type="project" value="TreeGrafter"/>
</dbReference>
<dbReference type="GO" id="GO:0006412">
    <property type="term" value="P:translation"/>
    <property type="evidence" value="ECO:0007669"/>
    <property type="project" value="UniProtKB-UniRule"/>
</dbReference>
<dbReference type="FunFam" id="1.10.10.410:FF:000001">
    <property type="entry name" value="Aspartyl/glutamyl-tRNA(Asn/Gln) amidotransferase subunit B"/>
    <property type="match status" value="1"/>
</dbReference>
<dbReference type="Gene3D" id="1.10.10.410">
    <property type="match status" value="1"/>
</dbReference>
<dbReference type="HAMAP" id="MF_00121">
    <property type="entry name" value="GatB"/>
    <property type="match status" value="1"/>
</dbReference>
<dbReference type="InterPro" id="IPR017959">
    <property type="entry name" value="Asn/Gln-tRNA_amidoTrfase_suB/E"/>
</dbReference>
<dbReference type="InterPro" id="IPR006075">
    <property type="entry name" value="Asn/Gln-tRNA_Trfase_suB/E_cat"/>
</dbReference>
<dbReference type="InterPro" id="IPR018027">
    <property type="entry name" value="Asn/Gln_amidotransferase"/>
</dbReference>
<dbReference type="InterPro" id="IPR003789">
    <property type="entry name" value="Asn/Gln_tRNA_amidoTrase-B-like"/>
</dbReference>
<dbReference type="InterPro" id="IPR004413">
    <property type="entry name" value="GatB"/>
</dbReference>
<dbReference type="InterPro" id="IPR023168">
    <property type="entry name" value="GatB_Yqey_C_2"/>
</dbReference>
<dbReference type="InterPro" id="IPR017958">
    <property type="entry name" value="Gln-tRNA_amidoTrfase_suB_CS"/>
</dbReference>
<dbReference type="InterPro" id="IPR014746">
    <property type="entry name" value="Gln_synth/guanido_kin_cat_dom"/>
</dbReference>
<dbReference type="NCBIfam" id="TIGR00133">
    <property type="entry name" value="gatB"/>
    <property type="match status" value="1"/>
</dbReference>
<dbReference type="NCBIfam" id="NF004012">
    <property type="entry name" value="PRK05477.1-2"/>
    <property type="match status" value="1"/>
</dbReference>
<dbReference type="NCBIfam" id="NF004013">
    <property type="entry name" value="PRK05477.1-3"/>
    <property type="match status" value="1"/>
</dbReference>
<dbReference type="NCBIfam" id="NF004014">
    <property type="entry name" value="PRK05477.1-4"/>
    <property type="match status" value="1"/>
</dbReference>
<dbReference type="PANTHER" id="PTHR11659">
    <property type="entry name" value="GLUTAMYL-TRNA GLN AMIDOTRANSFERASE SUBUNIT B MITOCHONDRIAL AND PROKARYOTIC PET112-RELATED"/>
    <property type="match status" value="1"/>
</dbReference>
<dbReference type="PANTHER" id="PTHR11659:SF0">
    <property type="entry name" value="GLUTAMYL-TRNA(GLN) AMIDOTRANSFERASE SUBUNIT B, MITOCHONDRIAL"/>
    <property type="match status" value="1"/>
</dbReference>
<dbReference type="Pfam" id="PF02934">
    <property type="entry name" value="GatB_N"/>
    <property type="match status" value="1"/>
</dbReference>
<dbReference type="Pfam" id="PF02637">
    <property type="entry name" value="GatB_Yqey"/>
    <property type="match status" value="1"/>
</dbReference>
<dbReference type="SMART" id="SM00845">
    <property type="entry name" value="GatB_Yqey"/>
    <property type="match status" value="1"/>
</dbReference>
<dbReference type="SUPFAM" id="SSF89095">
    <property type="entry name" value="GatB/YqeY motif"/>
    <property type="match status" value="1"/>
</dbReference>
<dbReference type="SUPFAM" id="SSF55931">
    <property type="entry name" value="Glutamine synthetase/guanido kinase"/>
    <property type="match status" value="1"/>
</dbReference>
<dbReference type="PROSITE" id="PS01234">
    <property type="entry name" value="GATB"/>
    <property type="match status" value="1"/>
</dbReference>
<reference key="1">
    <citation type="journal article" date="2007" name="Microbiology">
        <title>Comparative analysis of the Corynebacterium glutamicum group and complete genome sequence of strain R.</title>
        <authorList>
            <person name="Yukawa H."/>
            <person name="Omumasaba C.A."/>
            <person name="Nonaka H."/>
            <person name="Kos P."/>
            <person name="Okai N."/>
            <person name="Suzuki N."/>
            <person name="Suda M."/>
            <person name="Tsuge Y."/>
            <person name="Watanabe J."/>
            <person name="Ikeda Y."/>
            <person name="Vertes A.A."/>
            <person name="Inui M."/>
        </authorList>
    </citation>
    <scope>NUCLEOTIDE SEQUENCE [LARGE SCALE GENOMIC DNA]</scope>
    <source>
        <strain>R</strain>
    </source>
</reference>
<evidence type="ECO:0000255" key="1">
    <source>
        <dbReference type="HAMAP-Rule" id="MF_00121"/>
    </source>
</evidence>
<evidence type="ECO:0000256" key="2">
    <source>
        <dbReference type="SAM" id="MobiDB-lite"/>
    </source>
</evidence>
<comment type="function">
    <text evidence="1">Allows the formation of correctly charged Asn-tRNA(Asn) or Gln-tRNA(Gln) through the transamidation of misacylated Asp-tRNA(Asn) or Glu-tRNA(Gln) in organisms which lack either or both of asparaginyl-tRNA or glutaminyl-tRNA synthetases. The reaction takes place in the presence of glutamine and ATP through an activated phospho-Asp-tRNA(Asn) or phospho-Glu-tRNA(Gln).</text>
</comment>
<comment type="catalytic activity">
    <reaction evidence="1">
        <text>L-glutamyl-tRNA(Gln) + L-glutamine + ATP + H2O = L-glutaminyl-tRNA(Gln) + L-glutamate + ADP + phosphate + H(+)</text>
        <dbReference type="Rhea" id="RHEA:17521"/>
        <dbReference type="Rhea" id="RHEA-COMP:9681"/>
        <dbReference type="Rhea" id="RHEA-COMP:9684"/>
        <dbReference type="ChEBI" id="CHEBI:15377"/>
        <dbReference type="ChEBI" id="CHEBI:15378"/>
        <dbReference type="ChEBI" id="CHEBI:29985"/>
        <dbReference type="ChEBI" id="CHEBI:30616"/>
        <dbReference type="ChEBI" id="CHEBI:43474"/>
        <dbReference type="ChEBI" id="CHEBI:58359"/>
        <dbReference type="ChEBI" id="CHEBI:78520"/>
        <dbReference type="ChEBI" id="CHEBI:78521"/>
        <dbReference type="ChEBI" id="CHEBI:456216"/>
    </reaction>
</comment>
<comment type="catalytic activity">
    <reaction evidence="1">
        <text>L-aspartyl-tRNA(Asn) + L-glutamine + ATP + H2O = L-asparaginyl-tRNA(Asn) + L-glutamate + ADP + phosphate + 2 H(+)</text>
        <dbReference type="Rhea" id="RHEA:14513"/>
        <dbReference type="Rhea" id="RHEA-COMP:9674"/>
        <dbReference type="Rhea" id="RHEA-COMP:9677"/>
        <dbReference type="ChEBI" id="CHEBI:15377"/>
        <dbReference type="ChEBI" id="CHEBI:15378"/>
        <dbReference type="ChEBI" id="CHEBI:29985"/>
        <dbReference type="ChEBI" id="CHEBI:30616"/>
        <dbReference type="ChEBI" id="CHEBI:43474"/>
        <dbReference type="ChEBI" id="CHEBI:58359"/>
        <dbReference type="ChEBI" id="CHEBI:78515"/>
        <dbReference type="ChEBI" id="CHEBI:78516"/>
        <dbReference type="ChEBI" id="CHEBI:456216"/>
    </reaction>
</comment>
<comment type="subunit">
    <text evidence="1">Heterotrimer of A, B and C subunits.</text>
</comment>
<comment type="similarity">
    <text evidence="1">Belongs to the GatB/GatE family. GatB subfamily.</text>
</comment>
<feature type="chain" id="PRO_1000015962" description="Aspartyl/glutamyl-tRNA(Asn/Gln) amidotransferase subunit B">
    <location>
        <begin position="1"/>
        <end position="501"/>
    </location>
</feature>
<feature type="region of interest" description="Disordered" evidence="2">
    <location>
        <begin position="276"/>
        <end position="299"/>
    </location>
</feature>
<feature type="compositionally biased region" description="Basic and acidic residues" evidence="2">
    <location>
        <begin position="288"/>
        <end position="299"/>
    </location>
</feature>
<protein>
    <recommendedName>
        <fullName evidence="1">Aspartyl/glutamyl-tRNA(Asn/Gln) amidotransferase subunit B</fullName>
        <shortName evidence="1">Asp/Glu-ADT subunit B</shortName>
        <ecNumber evidence="1">6.3.5.-</ecNumber>
    </recommendedName>
</protein>